<reference key="1">
    <citation type="submission" date="2007-11" db="EMBL/GenBank/DDBJ databases">
        <authorList>
            <consortium name="The Salmonella enterica serovar Arizonae Genome Sequencing Project"/>
            <person name="McClelland M."/>
            <person name="Sanderson E.K."/>
            <person name="Porwollik S."/>
            <person name="Spieth J."/>
            <person name="Clifton W.S."/>
            <person name="Fulton R."/>
            <person name="Chunyan W."/>
            <person name="Wollam A."/>
            <person name="Shah N."/>
            <person name="Pepin K."/>
            <person name="Bhonagiri V."/>
            <person name="Nash W."/>
            <person name="Johnson M."/>
            <person name="Thiruvilangam P."/>
            <person name="Wilson R."/>
        </authorList>
    </citation>
    <scope>NUCLEOTIDE SEQUENCE [LARGE SCALE GENOMIC DNA]</scope>
    <source>
        <strain>ATCC BAA-731 / CDC346-86 / RSK2980</strain>
    </source>
</reference>
<name>NORV_SALAR</name>
<accession>A9MFX6</accession>
<keyword id="KW-0963">Cytoplasm</keyword>
<keyword id="KW-0249">Electron transport</keyword>
<keyword id="KW-0285">Flavoprotein</keyword>
<keyword id="KW-0288">FMN</keyword>
<keyword id="KW-0408">Iron</keyword>
<keyword id="KW-0479">Metal-binding</keyword>
<keyword id="KW-0560">Oxidoreductase</keyword>
<keyword id="KW-1185">Reference proteome</keyword>
<keyword id="KW-0813">Transport</keyword>
<proteinExistence type="inferred from homology"/>
<evidence type="ECO:0000255" key="1">
    <source>
        <dbReference type="HAMAP-Rule" id="MF_01312"/>
    </source>
</evidence>
<comment type="function">
    <text evidence="1">Anaerobic nitric oxide reductase; uses NADH to detoxify nitric oxide (NO), protecting several 4Fe-4S NO-sensitive enzymes. Has at least 2 reductase partners, only one of which (NorW, flavorubredoxin reductase) has been identified. NO probably binds to the di-iron center; electrons enter from the NorW at rubredoxin and are transferred sequentially to the FMN center and the di-iron center. Also able to function as an aerobic oxygen reductase.</text>
</comment>
<comment type="cofactor">
    <cofactor evidence="1">
        <name>Fe cation</name>
        <dbReference type="ChEBI" id="CHEBI:24875"/>
    </cofactor>
    <text evidence="1">Binds 3 Fe cations per monomer.</text>
</comment>
<comment type="cofactor">
    <cofactor evidence="1">
        <name>FMN</name>
        <dbReference type="ChEBI" id="CHEBI:58210"/>
    </cofactor>
    <text evidence="1">Binds 1 FMN per monomer.</text>
</comment>
<comment type="pathway">
    <text evidence="1">Nitrogen metabolism; nitric oxide reduction.</text>
</comment>
<comment type="subunit">
    <text evidence="1">Homotetramer.</text>
</comment>
<comment type="subcellular location">
    <subcellularLocation>
        <location evidence="1">Cytoplasm</location>
    </subcellularLocation>
</comment>
<comment type="similarity">
    <text evidence="1">In the N-terminal section; belongs to the zinc metallo-hydrolase group 3 family.</text>
</comment>
<protein>
    <recommendedName>
        <fullName evidence="1">Anaerobic nitric oxide reductase flavorubredoxin</fullName>
        <shortName evidence="1">FlRd</shortName>
        <shortName evidence="1">FlavoRb</shortName>
    </recommendedName>
</protein>
<sequence>MSILVKNNIHWVGQRDWEVRDFHGTEYKTLRGSSYNSYLIREEKNVLIDTVDHKFSREFVQNLRSEIDLADIDYIIINHAEEDHAGALTELMAQIPDAPIYCTANAIDSINGHHHHPEWNFKVVKTGDTLDIGNGKQLIFVETPMLHWPDSMMTYMTGDAVLFSNDAFGQHYCDERLFNDEVDQTELFEQCQRYYANILTPFSRLVTPKITEILGFNLPVDMIATSHGVVWRDNPTQIVELYLKWAADYQEDRITIFYDTMSNNTRIMADAIAQGINEVDPNVAVKIFNVARSDKNEILTNVFRSKGVLVGTSTMNNVMMPKIAGLVEEMTGLRFRNKRASAFGSHGWSGGAVDRLSTRLQDAGFEMSLSLKAKWRPDLDALELCRQHGRDIARQWALAPLPETTQKTTPAEEITTCAAADLGPKMQCSVCQWIYDPALGEPLQDVAPGTPWSDVPDNFLCPECSLGKDVFDVLATEAK</sequence>
<gene>
    <name evidence="1" type="primary">norV</name>
    <name evidence="1" type="synonym">flrD</name>
    <name type="ordered locus">SARI_00131</name>
</gene>
<feature type="chain" id="PRO_1000086219" description="Anaerobic nitric oxide reductase flavorubredoxin">
    <location>
        <begin position="1"/>
        <end position="479"/>
    </location>
</feature>
<feature type="domain" description="Flavodoxin-like" evidence="1">
    <location>
        <begin position="254"/>
        <end position="393"/>
    </location>
</feature>
<feature type="domain" description="Rubredoxin-like" evidence="1">
    <location>
        <begin position="423"/>
        <end position="474"/>
    </location>
</feature>
<feature type="region of interest" description="Zinc metallo-hydrolase">
    <location>
        <begin position="30"/>
        <end position="210"/>
    </location>
</feature>
<feature type="binding site" evidence="1">
    <location>
        <position position="79"/>
    </location>
    <ligand>
        <name>Fe cation</name>
        <dbReference type="ChEBI" id="CHEBI:24875"/>
        <label>1</label>
    </ligand>
</feature>
<feature type="binding site" evidence="1">
    <location>
        <position position="81"/>
    </location>
    <ligand>
        <name>Fe cation</name>
        <dbReference type="ChEBI" id="CHEBI:24875"/>
        <label>1</label>
    </ligand>
</feature>
<feature type="binding site" evidence="1">
    <location>
        <position position="83"/>
    </location>
    <ligand>
        <name>Fe cation</name>
        <dbReference type="ChEBI" id="CHEBI:24875"/>
        <label>2</label>
    </ligand>
</feature>
<feature type="binding site" evidence="1">
    <location>
        <position position="147"/>
    </location>
    <ligand>
        <name>Fe cation</name>
        <dbReference type="ChEBI" id="CHEBI:24875"/>
        <label>1</label>
    </ligand>
</feature>
<feature type="binding site" evidence="1">
    <location>
        <position position="166"/>
    </location>
    <ligand>
        <name>Fe cation</name>
        <dbReference type="ChEBI" id="CHEBI:24875"/>
        <label>1</label>
    </ligand>
</feature>
<feature type="binding site" evidence="1">
    <location>
        <position position="166"/>
    </location>
    <ligand>
        <name>Fe cation</name>
        <dbReference type="ChEBI" id="CHEBI:24875"/>
        <label>2</label>
    </ligand>
</feature>
<feature type="binding site" evidence="1">
    <location>
        <position position="227"/>
    </location>
    <ligand>
        <name>Fe cation</name>
        <dbReference type="ChEBI" id="CHEBI:24875"/>
        <label>2</label>
    </ligand>
</feature>
<feature type="binding site" evidence="1">
    <location>
        <begin position="260"/>
        <end position="264"/>
    </location>
    <ligand>
        <name>FMN</name>
        <dbReference type="ChEBI" id="CHEBI:58210"/>
    </ligand>
</feature>
<feature type="binding site" evidence="1">
    <location>
        <begin position="342"/>
        <end position="369"/>
    </location>
    <ligand>
        <name>FMN</name>
        <dbReference type="ChEBI" id="CHEBI:58210"/>
    </ligand>
</feature>
<feature type="binding site" evidence="1">
    <location>
        <position position="428"/>
    </location>
    <ligand>
        <name>Fe cation</name>
        <dbReference type="ChEBI" id="CHEBI:24875"/>
        <label>3</label>
    </ligand>
</feature>
<feature type="binding site" evidence="1">
    <location>
        <position position="431"/>
    </location>
    <ligand>
        <name>Fe cation</name>
        <dbReference type="ChEBI" id="CHEBI:24875"/>
        <label>3</label>
    </ligand>
</feature>
<feature type="binding site" evidence="1">
    <location>
        <position position="461"/>
    </location>
    <ligand>
        <name>Fe cation</name>
        <dbReference type="ChEBI" id="CHEBI:24875"/>
        <label>3</label>
    </ligand>
</feature>
<feature type="binding site" evidence="1">
    <location>
        <position position="464"/>
    </location>
    <ligand>
        <name>Fe cation</name>
        <dbReference type="ChEBI" id="CHEBI:24875"/>
        <label>3</label>
    </ligand>
</feature>
<dbReference type="EMBL" id="CP000880">
    <property type="protein sequence ID" value="ABX20084.1"/>
    <property type="molecule type" value="Genomic_DNA"/>
</dbReference>
<dbReference type="SMR" id="A9MFX6"/>
<dbReference type="STRING" id="41514.SARI_00131"/>
<dbReference type="KEGG" id="ses:SARI_00131"/>
<dbReference type="HOGENOM" id="CLU_017490_0_1_6"/>
<dbReference type="UniPathway" id="UPA00638"/>
<dbReference type="Proteomes" id="UP000002084">
    <property type="component" value="Chromosome"/>
</dbReference>
<dbReference type="GO" id="GO:0005737">
    <property type="term" value="C:cytoplasm"/>
    <property type="evidence" value="ECO:0007669"/>
    <property type="project" value="UniProtKB-SubCell"/>
</dbReference>
<dbReference type="GO" id="GO:0009055">
    <property type="term" value="F:electron transfer activity"/>
    <property type="evidence" value="ECO:0007669"/>
    <property type="project" value="UniProtKB-UniRule"/>
</dbReference>
<dbReference type="GO" id="GO:0010181">
    <property type="term" value="F:FMN binding"/>
    <property type="evidence" value="ECO:0007669"/>
    <property type="project" value="InterPro"/>
</dbReference>
<dbReference type="GO" id="GO:0005506">
    <property type="term" value="F:iron ion binding"/>
    <property type="evidence" value="ECO:0007669"/>
    <property type="project" value="InterPro"/>
</dbReference>
<dbReference type="GO" id="GO:0016966">
    <property type="term" value="F:nitric oxide reductase activity"/>
    <property type="evidence" value="ECO:0007669"/>
    <property type="project" value="InterPro"/>
</dbReference>
<dbReference type="CDD" id="cd07709">
    <property type="entry name" value="flavodiiron_proteins_MBL-fold"/>
    <property type="match status" value="1"/>
</dbReference>
<dbReference type="CDD" id="cd00730">
    <property type="entry name" value="rubredoxin"/>
    <property type="match status" value="1"/>
</dbReference>
<dbReference type="FunFam" id="3.40.50.360:FF:000012">
    <property type="entry name" value="Anaerobic nitric oxide reductase flavorubredoxin"/>
    <property type="match status" value="1"/>
</dbReference>
<dbReference type="FunFam" id="3.60.15.10:FF:000009">
    <property type="entry name" value="Anaerobic nitric oxide reductase flavorubredoxin"/>
    <property type="match status" value="1"/>
</dbReference>
<dbReference type="Gene3D" id="2.20.28.10">
    <property type="match status" value="1"/>
</dbReference>
<dbReference type="Gene3D" id="3.40.50.360">
    <property type="match status" value="1"/>
</dbReference>
<dbReference type="Gene3D" id="3.60.15.10">
    <property type="entry name" value="Ribonuclease Z/Hydroxyacylglutathione hydrolase-like"/>
    <property type="match status" value="1"/>
</dbReference>
<dbReference type="HAMAP" id="MF_01312">
    <property type="entry name" value="NorV"/>
    <property type="match status" value="1"/>
</dbReference>
<dbReference type="InterPro" id="IPR023957">
    <property type="entry name" value="Anaer_NO_rdtase_flvorubredoxin"/>
</dbReference>
<dbReference type="InterPro" id="IPR008254">
    <property type="entry name" value="Flavodoxin/NO_synth"/>
</dbReference>
<dbReference type="InterPro" id="IPR029039">
    <property type="entry name" value="Flavoprotein-like_sf"/>
</dbReference>
<dbReference type="InterPro" id="IPR001279">
    <property type="entry name" value="Metallo-B-lactamas"/>
</dbReference>
<dbReference type="InterPro" id="IPR045761">
    <property type="entry name" value="ODP_dom"/>
</dbReference>
<dbReference type="InterPro" id="IPR036866">
    <property type="entry name" value="RibonucZ/Hydroxyglut_hydro"/>
</dbReference>
<dbReference type="InterPro" id="IPR024934">
    <property type="entry name" value="Rubredoxin-like_dom"/>
</dbReference>
<dbReference type="InterPro" id="IPR016440">
    <property type="entry name" value="Rubredoxin-O_OxRdtase"/>
</dbReference>
<dbReference type="InterPro" id="IPR024935">
    <property type="entry name" value="Rubredoxin_dom"/>
</dbReference>
<dbReference type="NCBIfam" id="NF003954">
    <property type="entry name" value="PRK05452.1"/>
    <property type="match status" value="1"/>
</dbReference>
<dbReference type="PANTHER" id="PTHR43717">
    <property type="entry name" value="ANAEROBIC NITRIC OXIDE REDUCTASE FLAVORUBREDOXIN"/>
    <property type="match status" value="1"/>
</dbReference>
<dbReference type="PANTHER" id="PTHR43717:SF1">
    <property type="entry name" value="ANAEROBIC NITRIC OXIDE REDUCTASE FLAVORUBREDOXIN"/>
    <property type="match status" value="1"/>
</dbReference>
<dbReference type="Pfam" id="PF00258">
    <property type="entry name" value="Flavodoxin_1"/>
    <property type="match status" value="1"/>
</dbReference>
<dbReference type="Pfam" id="PF19583">
    <property type="entry name" value="ODP"/>
    <property type="match status" value="1"/>
</dbReference>
<dbReference type="Pfam" id="PF00301">
    <property type="entry name" value="Rubredoxin"/>
    <property type="match status" value="1"/>
</dbReference>
<dbReference type="PIRSF" id="PIRSF005243">
    <property type="entry name" value="ROO"/>
    <property type="match status" value="1"/>
</dbReference>
<dbReference type="PRINTS" id="PR00163">
    <property type="entry name" value="RUBREDOXIN"/>
</dbReference>
<dbReference type="SMART" id="SM00849">
    <property type="entry name" value="Lactamase_B"/>
    <property type="match status" value="1"/>
</dbReference>
<dbReference type="SUPFAM" id="SSF52218">
    <property type="entry name" value="Flavoproteins"/>
    <property type="match status" value="1"/>
</dbReference>
<dbReference type="SUPFAM" id="SSF56281">
    <property type="entry name" value="Metallo-hydrolase/oxidoreductase"/>
    <property type="match status" value="1"/>
</dbReference>
<dbReference type="SUPFAM" id="SSF57802">
    <property type="entry name" value="Rubredoxin-like"/>
    <property type="match status" value="1"/>
</dbReference>
<dbReference type="PROSITE" id="PS50902">
    <property type="entry name" value="FLAVODOXIN_LIKE"/>
    <property type="match status" value="1"/>
</dbReference>
<dbReference type="PROSITE" id="PS50903">
    <property type="entry name" value="RUBREDOXIN_LIKE"/>
    <property type="match status" value="1"/>
</dbReference>
<organism>
    <name type="scientific">Salmonella arizonae (strain ATCC BAA-731 / CDC346-86 / RSK2980)</name>
    <dbReference type="NCBI Taxonomy" id="41514"/>
    <lineage>
        <taxon>Bacteria</taxon>
        <taxon>Pseudomonadati</taxon>
        <taxon>Pseudomonadota</taxon>
        <taxon>Gammaproteobacteria</taxon>
        <taxon>Enterobacterales</taxon>
        <taxon>Enterobacteriaceae</taxon>
        <taxon>Salmonella</taxon>
    </lineage>
</organism>